<proteinExistence type="inferred from homology"/>
<organism>
    <name type="scientific">Yersinia pseudotuberculosis serotype IB (strain PB1/+)</name>
    <dbReference type="NCBI Taxonomy" id="502801"/>
    <lineage>
        <taxon>Bacteria</taxon>
        <taxon>Pseudomonadati</taxon>
        <taxon>Pseudomonadota</taxon>
        <taxon>Gammaproteobacteria</taxon>
        <taxon>Enterobacterales</taxon>
        <taxon>Yersiniaceae</taxon>
        <taxon>Yersinia</taxon>
    </lineage>
</organism>
<gene>
    <name evidence="1" type="primary">gcvT</name>
    <name type="ordered locus">YPTS_3313</name>
</gene>
<protein>
    <recommendedName>
        <fullName evidence="1">Aminomethyltransferase</fullName>
        <ecNumber evidence="1">2.1.2.10</ecNumber>
    </recommendedName>
    <alternativeName>
        <fullName evidence="1">Glycine cleavage system T protein</fullName>
    </alternativeName>
</protein>
<accession>B2K0Q5</accession>
<sequence>MAKQTPLYDQHVACGARMVDFHGWMMPLHYGSQIDEHHFVRQDAGMFDVSHMTIVDLHGNRTREFLRYLLANDVAKLTQPGKALYTGMLNESGGVIDDLIVYFLSEDYFRLVVNSATRDKDLAWISQHAEPYQVEVTVRDDLALIAVQGPQAQQKVATLLTTEQQQAIAGMKPFFGIQTGDLFIATTGYTGEAGYEIALPKQQVVAFWQQLLAAGVKPAGLGARDTLRLEAGMNLYGQEMDEKTSPLAANMGWTVAWQPEDRQFIGRAALERQRMKGTEQLVGLIMTEKGVLRNELPVYFFDAAGNQHVGVITSGSFSPTLGFSIALARVPAGIGEHAVVQIRNREMPVRVTKPGFVRAGKAIVL</sequence>
<evidence type="ECO:0000255" key="1">
    <source>
        <dbReference type="HAMAP-Rule" id="MF_00259"/>
    </source>
</evidence>
<feature type="chain" id="PRO_1000114128" description="Aminomethyltransferase">
    <location>
        <begin position="1"/>
        <end position="365"/>
    </location>
</feature>
<dbReference type="EC" id="2.1.2.10" evidence="1"/>
<dbReference type="EMBL" id="CP001048">
    <property type="protein sequence ID" value="ACC90268.1"/>
    <property type="molecule type" value="Genomic_DNA"/>
</dbReference>
<dbReference type="RefSeq" id="WP_002209949.1">
    <property type="nucleotide sequence ID" value="NZ_CP009780.1"/>
</dbReference>
<dbReference type="SMR" id="B2K0Q5"/>
<dbReference type="GeneID" id="57973733"/>
<dbReference type="KEGG" id="ypb:YPTS_3313"/>
<dbReference type="PATRIC" id="fig|502801.10.peg.2754"/>
<dbReference type="GO" id="GO:0005829">
    <property type="term" value="C:cytosol"/>
    <property type="evidence" value="ECO:0007669"/>
    <property type="project" value="TreeGrafter"/>
</dbReference>
<dbReference type="GO" id="GO:0005960">
    <property type="term" value="C:glycine cleavage complex"/>
    <property type="evidence" value="ECO:0007669"/>
    <property type="project" value="InterPro"/>
</dbReference>
<dbReference type="GO" id="GO:0004047">
    <property type="term" value="F:aminomethyltransferase activity"/>
    <property type="evidence" value="ECO:0007669"/>
    <property type="project" value="UniProtKB-UniRule"/>
</dbReference>
<dbReference type="GO" id="GO:0008483">
    <property type="term" value="F:transaminase activity"/>
    <property type="evidence" value="ECO:0007669"/>
    <property type="project" value="UniProtKB-KW"/>
</dbReference>
<dbReference type="GO" id="GO:0019464">
    <property type="term" value="P:glycine decarboxylation via glycine cleavage system"/>
    <property type="evidence" value="ECO:0007669"/>
    <property type="project" value="UniProtKB-UniRule"/>
</dbReference>
<dbReference type="FunFam" id="2.40.30.110:FF:000001">
    <property type="entry name" value="Aminomethyltransferase"/>
    <property type="match status" value="1"/>
</dbReference>
<dbReference type="FunFam" id="3.30.70.1400:FF:000001">
    <property type="entry name" value="Aminomethyltransferase"/>
    <property type="match status" value="1"/>
</dbReference>
<dbReference type="FunFam" id="4.10.1250.10:FF:000001">
    <property type="entry name" value="Aminomethyltransferase"/>
    <property type="match status" value="1"/>
</dbReference>
<dbReference type="Gene3D" id="2.40.30.110">
    <property type="entry name" value="Aminomethyltransferase beta-barrel domains"/>
    <property type="match status" value="1"/>
</dbReference>
<dbReference type="Gene3D" id="3.30.70.1400">
    <property type="entry name" value="Aminomethyltransferase beta-barrel domains"/>
    <property type="match status" value="1"/>
</dbReference>
<dbReference type="Gene3D" id="4.10.1250.10">
    <property type="entry name" value="Aminomethyltransferase fragment"/>
    <property type="match status" value="1"/>
</dbReference>
<dbReference type="Gene3D" id="3.30.1360.120">
    <property type="entry name" value="Probable tRNA modification gtpase trme, domain 1"/>
    <property type="match status" value="1"/>
</dbReference>
<dbReference type="HAMAP" id="MF_00259">
    <property type="entry name" value="GcvT"/>
    <property type="match status" value="1"/>
</dbReference>
<dbReference type="InterPro" id="IPR006223">
    <property type="entry name" value="GCS_T"/>
</dbReference>
<dbReference type="InterPro" id="IPR022903">
    <property type="entry name" value="GCS_T_bac"/>
</dbReference>
<dbReference type="InterPro" id="IPR013977">
    <property type="entry name" value="GCST_C"/>
</dbReference>
<dbReference type="InterPro" id="IPR006222">
    <property type="entry name" value="GCV_T_N"/>
</dbReference>
<dbReference type="InterPro" id="IPR028896">
    <property type="entry name" value="GcvT/YgfZ/DmdA"/>
</dbReference>
<dbReference type="InterPro" id="IPR029043">
    <property type="entry name" value="GcvT/YgfZ_C"/>
</dbReference>
<dbReference type="InterPro" id="IPR027266">
    <property type="entry name" value="TrmE/GcvT_dom1"/>
</dbReference>
<dbReference type="NCBIfam" id="TIGR00528">
    <property type="entry name" value="gcvT"/>
    <property type="match status" value="1"/>
</dbReference>
<dbReference type="NCBIfam" id="NF001567">
    <property type="entry name" value="PRK00389.1"/>
    <property type="match status" value="1"/>
</dbReference>
<dbReference type="PANTHER" id="PTHR43757">
    <property type="entry name" value="AMINOMETHYLTRANSFERASE"/>
    <property type="match status" value="1"/>
</dbReference>
<dbReference type="PANTHER" id="PTHR43757:SF2">
    <property type="entry name" value="AMINOMETHYLTRANSFERASE, MITOCHONDRIAL"/>
    <property type="match status" value="1"/>
</dbReference>
<dbReference type="Pfam" id="PF01571">
    <property type="entry name" value="GCV_T"/>
    <property type="match status" value="1"/>
</dbReference>
<dbReference type="Pfam" id="PF08669">
    <property type="entry name" value="GCV_T_C"/>
    <property type="match status" value="1"/>
</dbReference>
<dbReference type="PIRSF" id="PIRSF006487">
    <property type="entry name" value="GcvT"/>
    <property type="match status" value="1"/>
</dbReference>
<dbReference type="SUPFAM" id="SSF101790">
    <property type="entry name" value="Aminomethyltransferase beta-barrel domain"/>
    <property type="match status" value="1"/>
</dbReference>
<dbReference type="SUPFAM" id="SSF103025">
    <property type="entry name" value="Folate-binding domain"/>
    <property type="match status" value="1"/>
</dbReference>
<name>GCST_YERPB</name>
<comment type="function">
    <text evidence="1">The glycine cleavage system catalyzes the degradation of glycine.</text>
</comment>
<comment type="catalytic activity">
    <reaction evidence="1">
        <text>N(6)-[(R)-S(8)-aminomethyldihydrolipoyl]-L-lysyl-[protein] + (6S)-5,6,7,8-tetrahydrofolate = N(6)-[(R)-dihydrolipoyl]-L-lysyl-[protein] + (6R)-5,10-methylene-5,6,7,8-tetrahydrofolate + NH4(+)</text>
        <dbReference type="Rhea" id="RHEA:16945"/>
        <dbReference type="Rhea" id="RHEA-COMP:10475"/>
        <dbReference type="Rhea" id="RHEA-COMP:10492"/>
        <dbReference type="ChEBI" id="CHEBI:15636"/>
        <dbReference type="ChEBI" id="CHEBI:28938"/>
        <dbReference type="ChEBI" id="CHEBI:57453"/>
        <dbReference type="ChEBI" id="CHEBI:83100"/>
        <dbReference type="ChEBI" id="CHEBI:83143"/>
        <dbReference type="EC" id="2.1.2.10"/>
    </reaction>
</comment>
<comment type="subunit">
    <text evidence="1">The glycine cleavage system is composed of four proteins: P, T, L and H.</text>
</comment>
<comment type="similarity">
    <text evidence="1">Belongs to the GcvT family.</text>
</comment>
<reference key="1">
    <citation type="submission" date="2008-04" db="EMBL/GenBank/DDBJ databases">
        <title>Complete sequence of Yersinia pseudotuberculosis PB1/+.</title>
        <authorList>
            <person name="Copeland A."/>
            <person name="Lucas S."/>
            <person name="Lapidus A."/>
            <person name="Glavina del Rio T."/>
            <person name="Dalin E."/>
            <person name="Tice H."/>
            <person name="Bruce D."/>
            <person name="Goodwin L."/>
            <person name="Pitluck S."/>
            <person name="Munk A.C."/>
            <person name="Brettin T."/>
            <person name="Detter J.C."/>
            <person name="Han C."/>
            <person name="Tapia R."/>
            <person name="Schmutz J."/>
            <person name="Larimer F."/>
            <person name="Land M."/>
            <person name="Hauser L."/>
            <person name="Challacombe J.F."/>
            <person name="Green L."/>
            <person name="Lindler L.E."/>
            <person name="Nikolich M.P."/>
            <person name="Richardson P."/>
        </authorList>
    </citation>
    <scope>NUCLEOTIDE SEQUENCE [LARGE SCALE GENOMIC DNA]</scope>
    <source>
        <strain>PB1/+</strain>
    </source>
</reference>
<keyword id="KW-0032">Aminotransferase</keyword>
<keyword id="KW-0808">Transferase</keyword>